<accession>A6WRX8</accession>
<gene>
    <name evidence="1" type="primary">luxS</name>
    <name type="ordered locus">Shew185_3440</name>
</gene>
<feature type="chain" id="PRO_1000004847" description="S-ribosylhomocysteine lyase">
    <location>
        <begin position="1"/>
        <end position="169"/>
    </location>
</feature>
<feature type="binding site" evidence="1">
    <location>
        <position position="54"/>
    </location>
    <ligand>
        <name>Fe cation</name>
        <dbReference type="ChEBI" id="CHEBI:24875"/>
    </ligand>
</feature>
<feature type="binding site" evidence="1">
    <location>
        <position position="58"/>
    </location>
    <ligand>
        <name>Fe cation</name>
        <dbReference type="ChEBI" id="CHEBI:24875"/>
    </ligand>
</feature>
<feature type="binding site" evidence="1">
    <location>
        <position position="128"/>
    </location>
    <ligand>
        <name>Fe cation</name>
        <dbReference type="ChEBI" id="CHEBI:24875"/>
    </ligand>
</feature>
<name>LUXS_SHEB8</name>
<proteinExistence type="inferred from homology"/>
<dbReference type="EC" id="4.4.1.21" evidence="1"/>
<dbReference type="EMBL" id="CP000753">
    <property type="protein sequence ID" value="ABS09567.1"/>
    <property type="molecule type" value="Genomic_DNA"/>
</dbReference>
<dbReference type="RefSeq" id="WP_006080460.1">
    <property type="nucleotide sequence ID" value="NC_009665.1"/>
</dbReference>
<dbReference type="SMR" id="A6WRX8"/>
<dbReference type="GeneID" id="11773601"/>
<dbReference type="KEGG" id="sbm:Shew185_3440"/>
<dbReference type="HOGENOM" id="CLU_107531_2_0_6"/>
<dbReference type="GO" id="GO:0005506">
    <property type="term" value="F:iron ion binding"/>
    <property type="evidence" value="ECO:0007669"/>
    <property type="project" value="InterPro"/>
</dbReference>
<dbReference type="GO" id="GO:0043768">
    <property type="term" value="F:S-ribosylhomocysteine lyase activity"/>
    <property type="evidence" value="ECO:0007669"/>
    <property type="project" value="UniProtKB-UniRule"/>
</dbReference>
<dbReference type="GO" id="GO:0009372">
    <property type="term" value="P:quorum sensing"/>
    <property type="evidence" value="ECO:0007669"/>
    <property type="project" value="UniProtKB-UniRule"/>
</dbReference>
<dbReference type="FunFam" id="3.30.1360.80:FF:000001">
    <property type="entry name" value="S-ribosylhomocysteine lyase"/>
    <property type="match status" value="1"/>
</dbReference>
<dbReference type="Gene3D" id="3.30.1360.80">
    <property type="entry name" value="S-ribosylhomocysteinase (LuxS)"/>
    <property type="match status" value="1"/>
</dbReference>
<dbReference type="HAMAP" id="MF_00091">
    <property type="entry name" value="LuxS"/>
    <property type="match status" value="1"/>
</dbReference>
<dbReference type="InterPro" id="IPR037005">
    <property type="entry name" value="LuxS_sf"/>
</dbReference>
<dbReference type="InterPro" id="IPR011249">
    <property type="entry name" value="Metalloenz_LuxS/M16"/>
</dbReference>
<dbReference type="InterPro" id="IPR003815">
    <property type="entry name" value="S-ribosylhomocysteinase"/>
</dbReference>
<dbReference type="NCBIfam" id="NF002602">
    <property type="entry name" value="PRK02260.1-2"/>
    <property type="match status" value="1"/>
</dbReference>
<dbReference type="PANTHER" id="PTHR35799">
    <property type="entry name" value="S-RIBOSYLHOMOCYSTEINE LYASE"/>
    <property type="match status" value="1"/>
</dbReference>
<dbReference type="PANTHER" id="PTHR35799:SF1">
    <property type="entry name" value="S-RIBOSYLHOMOCYSTEINE LYASE"/>
    <property type="match status" value="1"/>
</dbReference>
<dbReference type="Pfam" id="PF02664">
    <property type="entry name" value="LuxS"/>
    <property type="match status" value="1"/>
</dbReference>
<dbReference type="PIRSF" id="PIRSF006160">
    <property type="entry name" value="AI2"/>
    <property type="match status" value="1"/>
</dbReference>
<dbReference type="PRINTS" id="PR01487">
    <property type="entry name" value="LUXSPROTEIN"/>
</dbReference>
<dbReference type="SUPFAM" id="SSF63411">
    <property type="entry name" value="LuxS/MPP-like metallohydrolase"/>
    <property type="match status" value="1"/>
</dbReference>
<comment type="function">
    <text evidence="1">Involved in the synthesis of autoinducer 2 (AI-2) which is secreted by bacteria and is used to communicate both the cell density and the metabolic potential of the environment. The regulation of gene expression in response to changes in cell density is called quorum sensing. Catalyzes the transformation of S-ribosylhomocysteine (RHC) to homocysteine (HC) and 4,5-dihydroxy-2,3-pentadione (DPD).</text>
</comment>
<comment type="catalytic activity">
    <reaction evidence="1">
        <text>S-(5-deoxy-D-ribos-5-yl)-L-homocysteine = (S)-4,5-dihydroxypentane-2,3-dione + L-homocysteine</text>
        <dbReference type="Rhea" id="RHEA:17753"/>
        <dbReference type="ChEBI" id="CHEBI:29484"/>
        <dbReference type="ChEBI" id="CHEBI:58195"/>
        <dbReference type="ChEBI" id="CHEBI:58199"/>
        <dbReference type="EC" id="4.4.1.21"/>
    </reaction>
</comment>
<comment type="cofactor">
    <cofactor evidence="1">
        <name>Fe cation</name>
        <dbReference type="ChEBI" id="CHEBI:24875"/>
    </cofactor>
    <text evidence="1">Binds 1 Fe cation per subunit.</text>
</comment>
<comment type="subunit">
    <text evidence="1">Homodimer.</text>
</comment>
<comment type="similarity">
    <text evidence="1">Belongs to the LuxS family.</text>
</comment>
<protein>
    <recommendedName>
        <fullName evidence="1">S-ribosylhomocysteine lyase</fullName>
        <ecNumber evidence="1">4.4.1.21</ecNumber>
    </recommendedName>
    <alternativeName>
        <fullName evidence="1">AI-2 synthesis protein</fullName>
    </alternativeName>
    <alternativeName>
        <fullName evidence="1">Autoinducer-2 production protein LuxS</fullName>
    </alternativeName>
</protein>
<sequence length="169" mass="18831">MPLLDSFTVDHTRMNAPAVRVAKHMSTPKGDAITVFDLRFCAPNKDILSERGIHTLEHLFAGFMRDHLNGSNVEIIDISPMGCRTGFYMSLIGEPTERQVADAWLAAMEDVLKVVEQSEIPELNEYQCGTYEMHSLEQAQDIARNIIAAGVSVNRNDDLKLSDEILGNL</sequence>
<evidence type="ECO:0000255" key="1">
    <source>
        <dbReference type="HAMAP-Rule" id="MF_00091"/>
    </source>
</evidence>
<reference key="1">
    <citation type="submission" date="2007-07" db="EMBL/GenBank/DDBJ databases">
        <title>Complete sequence of chromosome of Shewanella baltica OS185.</title>
        <authorList>
            <consortium name="US DOE Joint Genome Institute"/>
            <person name="Copeland A."/>
            <person name="Lucas S."/>
            <person name="Lapidus A."/>
            <person name="Barry K."/>
            <person name="Glavina del Rio T."/>
            <person name="Dalin E."/>
            <person name="Tice H."/>
            <person name="Pitluck S."/>
            <person name="Sims D."/>
            <person name="Brettin T."/>
            <person name="Bruce D."/>
            <person name="Detter J.C."/>
            <person name="Han C."/>
            <person name="Schmutz J."/>
            <person name="Larimer F."/>
            <person name="Land M."/>
            <person name="Hauser L."/>
            <person name="Kyrpides N."/>
            <person name="Mikhailova N."/>
            <person name="Brettar I."/>
            <person name="Rodrigues J."/>
            <person name="Konstantinidis K."/>
            <person name="Tiedje J."/>
            <person name="Richardson P."/>
        </authorList>
    </citation>
    <scope>NUCLEOTIDE SEQUENCE [LARGE SCALE GENOMIC DNA]</scope>
    <source>
        <strain>OS185</strain>
    </source>
</reference>
<organism>
    <name type="scientific">Shewanella baltica (strain OS185)</name>
    <dbReference type="NCBI Taxonomy" id="402882"/>
    <lineage>
        <taxon>Bacteria</taxon>
        <taxon>Pseudomonadati</taxon>
        <taxon>Pseudomonadota</taxon>
        <taxon>Gammaproteobacteria</taxon>
        <taxon>Alteromonadales</taxon>
        <taxon>Shewanellaceae</taxon>
        <taxon>Shewanella</taxon>
    </lineage>
</organism>
<keyword id="KW-0071">Autoinducer synthesis</keyword>
<keyword id="KW-0408">Iron</keyword>
<keyword id="KW-0456">Lyase</keyword>
<keyword id="KW-0479">Metal-binding</keyword>
<keyword id="KW-0673">Quorum sensing</keyword>